<dbReference type="EC" id="2.5.1.7" evidence="1"/>
<dbReference type="EMBL" id="CP001089">
    <property type="protein sequence ID" value="ACD94543.1"/>
    <property type="molecule type" value="Genomic_DNA"/>
</dbReference>
<dbReference type="RefSeq" id="WP_012468899.1">
    <property type="nucleotide sequence ID" value="NC_010814.1"/>
</dbReference>
<dbReference type="SMR" id="B3E4X8"/>
<dbReference type="STRING" id="398767.Glov_0818"/>
<dbReference type="KEGG" id="glo:Glov_0818"/>
<dbReference type="eggNOG" id="COG0766">
    <property type="taxonomic scope" value="Bacteria"/>
</dbReference>
<dbReference type="HOGENOM" id="CLU_027387_0_0_7"/>
<dbReference type="OrthoDB" id="9803760at2"/>
<dbReference type="UniPathway" id="UPA00219"/>
<dbReference type="Proteomes" id="UP000002420">
    <property type="component" value="Chromosome"/>
</dbReference>
<dbReference type="GO" id="GO:0005737">
    <property type="term" value="C:cytoplasm"/>
    <property type="evidence" value="ECO:0007669"/>
    <property type="project" value="UniProtKB-SubCell"/>
</dbReference>
<dbReference type="GO" id="GO:0008760">
    <property type="term" value="F:UDP-N-acetylglucosamine 1-carboxyvinyltransferase activity"/>
    <property type="evidence" value="ECO:0007669"/>
    <property type="project" value="UniProtKB-UniRule"/>
</dbReference>
<dbReference type="GO" id="GO:0051301">
    <property type="term" value="P:cell division"/>
    <property type="evidence" value="ECO:0007669"/>
    <property type="project" value="UniProtKB-KW"/>
</dbReference>
<dbReference type="GO" id="GO:0071555">
    <property type="term" value="P:cell wall organization"/>
    <property type="evidence" value="ECO:0007669"/>
    <property type="project" value="UniProtKB-KW"/>
</dbReference>
<dbReference type="GO" id="GO:0009252">
    <property type="term" value="P:peptidoglycan biosynthetic process"/>
    <property type="evidence" value="ECO:0007669"/>
    <property type="project" value="UniProtKB-UniRule"/>
</dbReference>
<dbReference type="GO" id="GO:0008360">
    <property type="term" value="P:regulation of cell shape"/>
    <property type="evidence" value="ECO:0007669"/>
    <property type="project" value="UniProtKB-KW"/>
</dbReference>
<dbReference type="GO" id="GO:0019277">
    <property type="term" value="P:UDP-N-acetylgalactosamine biosynthetic process"/>
    <property type="evidence" value="ECO:0007669"/>
    <property type="project" value="InterPro"/>
</dbReference>
<dbReference type="CDD" id="cd01555">
    <property type="entry name" value="UdpNAET"/>
    <property type="match status" value="1"/>
</dbReference>
<dbReference type="FunFam" id="3.65.10.10:FF:000001">
    <property type="entry name" value="UDP-N-acetylglucosamine 1-carboxyvinyltransferase"/>
    <property type="match status" value="1"/>
</dbReference>
<dbReference type="Gene3D" id="3.65.10.10">
    <property type="entry name" value="Enolpyruvate transferase domain"/>
    <property type="match status" value="2"/>
</dbReference>
<dbReference type="HAMAP" id="MF_00111">
    <property type="entry name" value="MurA"/>
    <property type="match status" value="1"/>
</dbReference>
<dbReference type="InterPro" id="IPR001986">
    <property type="entry name" value="Enolpyruvate_Tfrase_dom"/>
</dbReference>
<dbReference type="InterPro" id="IPR036968">
    <property type="entry name" value="Enolpyruvate_Tfrase_sf"/>
</dbReference>
<dbReference type="InterPro" id="IPR050068">
    <property type="entry name" value="MurA_subfamily"/>
</dbReference>
<dbReference type="InterPro" id="IPR013792">
    <property type="entry name" value="RNA3'P_cycl/enolpyr_Trfase_a/b"/>
</dbReference>
<dbReference type="InterPro" id="IPR005750">
    <property type="entry name" value="UDP_GlcNAc_COvinyl_MurA"/>
</dbReference>
<dbReference type="NCBIfam" id="TIGR01072">
    <property type="entry name" value="murA"/>
    <property type="match status" value="1"/>
</dbReference>
<dbReference type="NCBIfam" id="NF006873">
    <property type="entry name" value="PRK09369.1"/>
    <property type="match status" value="1"/>
</dbReference>
<dbReference type="PANTHER" id="PTHR43783">
    <property type="entry name" value="UDP-N-ACETYLGLUCOSAMINE 1-CARBOXYVINYLTRANSFERASE"/>
    <property type="match status" value="1"/>
</dbReference>
<dbReference type="PANTHER" id="PTHR43783:SF1">
    <property type="entry name" value="UDP-N-ACETYLGLUCOSAMINE 1-CARBOXYVINYLTRANSFERASE"/>
    <property type="match status" value="1"/>
</dbReference>
<dbReference type="Pfam" id="PF00275">
    <property type="entry name" value="EPSP_synthase"/>
    <property type="match status" value="1"/>
</dbReference>
<dbReference type="SUPFAM" id="SSF55205">
    <property type="entry name" value="EPT/RTPC-like"/>
    <property type="match status" value="1"/>
</dbReference>
<evidence type="ECO:0000255" key="1">
    <source>
        <dbReference type="HAMAP-Rule" id="MF_00111"/>
    </source>
</evidence>
<keyword id="KW-0131">Cell cycle</keyword>
<keyword id="KW-0132">Cell division</keyword>
<keyword id="KW-0133">Cell shape</keyword>
<keyword id="KW-0961">Cell wall biogenesis/degradation</keyword>
<keyword id="KW-0963">Cytoplasm</keyword>
<keyword id="KW-0573">Peptidoglycan synthesis</keyword>
<keyword id="KW-0670">Pyruvate</keyword>
<keyword id="KW-1185">Reference proteome</keyword>
<keyword id="KW-0808">Transferase</keyword>
<organism>
    <name type="scientific">Trichlorobacter lovleyi (strain ATCC BAA-1151 / DSM 17278 / SZ)</name>
    <name type="common">Geobacter lovleyi</name>
    <dbReference type="NCBI Taxonomy" id="398767"/>
    <lineage>
        <taxon>Bacteria</taxon>
        <taxon>Pseudomonadati</taxon>
        <taxon>Thermodesulfobacteriota</taxon>
        <taxon>Desulfuromonadia</taxon>
        <taxon>Geobacterales</taxon>
        <taxon>Geobacteraceae</taxon>
        <taxon>Trichlorobacter</taxon>
    </lineage>
</organism>
<gene>
    <name evidence="1" type="primary">murA</name>
    <name type="ordered locus">Glov_0818</name>
</gene>
<protein>
    <recommendedName>
        <fullName evidence="1">UDP-N-acetylglucosamine 1-carboxyvinyltransferase</fullName>
        <ecNumber evidence="1">2.5.1.7</ecNumber>
    </recommendedName>
    <alternativeName>
        <fullName evidence="1">Enoylpyruvate transferase</fullName>
    </alternativeName>
    <alternativeName>
        <fullName evidence="1">UDP-N-acetylglucosamine enolpyruvyl transferase</fullName>
        <shortName evidence="1">EPT</shortName>
    </alternativeName>
</protein>
<name>MURA_TRIL1</name>
<feature type="chain" id="PRO_1000094693" description="UDP-N-acetylglucosamine 1-carboxyvinyltransferase">
    <location>
        <begin position="1"/>
        <end position="419"/>
    </location>
</feature>
<feature type="active site" description="Proton donor" evidence="1">
    <location>
        <position position="116"/>
    </location>
</feature>
<feature type="binding site" evidence="1">
    <location>
        <begin position="22"/>
        <end position="23"/>
    </location>
    <ligand>
        <name>phosphoenolpyruvate</name>
        <dbReference type="ChEBI" id="CHEBI:58702"/>
    </ligand>
</feature>
<feature type="binding site" evidence="1">
    <location>
        <position position="92"/>
    </location>
    <ligand>
        <name>UDP-N-acetyl-alpha-D-glucosamine</name>
        <dbReference type="ChEBI" id="CHEBI:57705"/>
    </ligand>
</feature>
<feature type="binding site" evidence="1">
    <location>
        <begin position="121"/>
        <end position="125"/>
    </location>
    <ligand>
        <name>UDP-N-acetyl-alpha-D-glucosamine</name>
        <dbReference type="ChEBI" id="CHEBI:57705"/>
    </ligand>
</feature>
<feature type="binding site" evidence="1">
    <location>
        <position position="305"/>
    </location>
    <ligand>
        <name>UDP-N-acetyl-alpha-D-glucosamine</name>
        <dbReference type="ChEBI" id="CHEBI:57705"/>
    </ligand>
</feature>
<feature type="binding site" evidence="1">
    <location>
        <position position="327"/>
    </location>
    <ligand>
        <name>UDP-N-acetyl-alpha-D-glucosamine</name>
        <dbReference type="ChEBI" id="CHEBI:57705"/>
    </ligand>
</feature>
<feature type="modified residue" description="2-(S-cysteinyl)pyruvic acid O-phosphothioketal" evidence="1">
    <location>
        <position position="116"/>
    </location>
</feature>
<reference key="1">
    <citation type="submission" date="2008-05" db="EMBL/GenBank/DDBJ databases">
        <title>Complete sequence of chromosome of Geobacter lovleyi SZ.</title>
        <authorList>
            <consortium name="US DOE Joint Genome Institute"/>
            <person name="Lucas S."/>
            <person name="Copeland A."/>
            <person name="Lapidus A."/>
            <person name="Glavina del Rio T."/>
            <person name="Dalin E."/>
            <person name="Tice H."/>
            <person name="Bruce D."/>
            <person name="Goodwin L."/>
            <person name="Pitluck S."/>
            <person name="Chertkov O."/>
            <person name="Meincke L."/>
            <person name="Brettin T."/>
            <person name="Detter J.C."/>
            <person name="Han C."/>
            <person name="Tapia R."/>
            <person name="Kuske C.R."/>
            <person name="Schmutz J."/>
            <person name="Larimer F."/>
            <person name="Land M."/>
            <person name="Hauser L."/>
            <person name="Kyrpides N."/>
            <person name="Mikhailova N."/>
            <person name="Sung Y."/>
            <person name="Fletcher K.E."/>
            <person name="Ritalahti K.M."/>
            <person name="Loeffler F.E."/>
            <person name="Richardson P."/>
        </authorList>
    </citation>
    <scope>NUCLEOTIDE SEQUENCE [LARGE SCALE GENOMIC DNA]</scope>
    <source>
        <strain>ATCC BAA-1151 / DSM 17278 / SZ</strain>
    </source>
</reference>
<proteinExistence type="inferred from homology"/>
<sequence length="419" mass="44519">MDKLIINGGRKLKGEVTVSGSKNASLPICIAAVLAPGASTITNVPRLRDITTTAKLLESLGATIERHENTMRIDAGTINTVEATYDLVKTMRASVLVLGPLLARFGRSRVSLPGGCAIGARPIDQHLKGLKALGAEIRLEHGYVEAIAKKGLKGARINFDVSTVGGTEHLMMAAAIAKGESILENAAREPEIADLADYLNRMGAKVEGAGTDTIRIQGVSELTPAAYEVMPDRIEAGTFMCAAAITGGDIKINGMKLEHLDALTFKLMDAGVEITNRNGVVRVKGPKRPQAVNIKTRPYPGFATDMQAQFMALMCVAEGASVISENIFENRFMHVSELLRFGADITVEGNSATVKGVKKLSGAPVMATDLRASACLVLAGLAAEGTTEIQRIYHLDRGYEQIETKLAGLGADIQRVSEP</sequence>
<comment type="function">
    <text evidence="1">Cell wall formation. Adds enolpyruvyl to UDP-N-acetylglucosamine.</text>
</comment>
<comment type="catalytic activity">
    <reaction evidence="1">
        <text>phosphoenolpyruvate + UDP-N-acetyl-alpha-D-glucosamine = UDP-N-acetyl-3-O-(1-carboxyvinyl)-alpha-D-glucosamine + phosphate</text>
        <dbReference type="Rhea" id="RHEA:18681"/>
        <dbReference type="ChEBI" id="CHEBI:43474"/>
        <dbReference type="ChEBI" id="CHEBI:57705"/>
        <dbReference type="ChEBI" id="CHEBI:58702"/>
        <dbReference type="ChEBI" id="CHEBI:68483"/>
        <dbReference type="EC" id="2.5.1.7"/>
    </reaction>
</comment>
<comment type="pathway">
    <text evidence="1">Cell wall biogenesis; peptidoglycan biosynthesis.</text>
</comment>
<comment type="subcellular location">
    <subcellularLocation>
        <location evidence="1">Cytoplasm</location>
    </subcellularLocation>
</comment>
<comment type="similarity">
    <text evidence="1">Belongs to the EPSP synthase family. MurA subfamily.</text>
</comment>
<accession>B3E4X8</accession>